<organismHost>
    <name type="scientific">Escherichia coli</name>
    <dbReference type="NCBI Taxonomy" id="562"/>
</organismHost>
<evidence type="ECO:0000269" key="1">
    <source>
    </source>
</evidence>
<evidence type="ECO:0000269" key="2">
    <source>
    </source>
</evidence>
<evidence type="ECO:0000269" key="3">
    <source>
    </source>
</evidence>
<evidence type="ECO:0000269" key="4">
    <source>
    </source>
</evidence>
<evidence type="ECO:0000303" key="5">
    <source>
    </source>
</evidence>
<evidence type="ECO:0000305" key="6"/>
<feature type="initiator methionine" description="Removed; by host" evidence="4">
    <location>
        <position position="1"/>
    </location>
</feature>
<feature type="chain" id="PRO_0000165039" description="Baseplate tail-tube junction protein gp48">
    <location>
        <begin position="2"/>
        <end position="364"/>
    </location>
</feature>
<protein>
    <recommendedName>
        <fullName evidence="6">Baseplate tail-tube junction protein gp48</fullName>
    </recommendedName>
    <alternativeName>
        <fullName evidence="6">Baseplate-tube cap</fullName>
    </alternativeName>
    <alternativeName>
        <fullName>Gene product 48</fullName>
        <shortName>gp48</shortName>
    </alternativeName>
</protein>
<comment type="function">
    <text evidence="3 4 5">Baseplate protein that forms, together with gp54, the baseplate-tail tube junction. The tail tube first 2 annuli are formed by gp48 and gp54, which are in continuation of the spike complex. Involved in the tail assembly. Morphogenesis of the baseplate is completed by association of gp48 and gp54, which bind the upper part of the baseplate dome to form the platform for polymerization of the tail tube.</text>
</comment>
<comment type="subunit">
    <text evidence="1 2 3">Homohexamer (PubMed:27193680). The tube first annulus is composed of a gp48 hexameric ring. Interacts with gp54. Part of the baseplate macromolecular complex which consists of gp5, gp5.4, gp27 (central spike complex); gp6, gp25, gp53 (inner baseplate); gp7, gp8 (intermediate baseplate); gp9, gp10, gp11, gp12 (peripheral); gp48 and gp54 (proximal region of the tail tube).</text>
</comment>
<comment type="subcellular location">
    <subcellularLocation>
        <location evidence="2 3">Virion</location>
    </subcellularLocation>
    <text evidence="5">Present in 6 copies in the baseplate.</text>
</comment>
<comment type="induction">
    <text evidence="6">Expressed in the late phase of the viral replicative cycle.</text>
</comment>
<gene>
    <name type="primary">48</name>
</gene>
<keyword id="KW-0002">3D-structure</keyword>
<keyword id="KW-0903">Direct protein sequencing</keyword>
<keyword id="KW-0426">Late protein</keyword>
<keyword id="KW-1185">Reference proteome</keyword>
<keyword id="KW-1226">Viral baseplate protein</keyword>
<keyword id="KW-1188">Viral release from host cell</keyword>
<keyword id="KW-1245">Viral tail assembly</keyword>
<keyword id="KW-1227">Viral tail protein</keyword>
<keyword id="KW-0946">Virion</keyword>
<dbReference type="EMBL" id="M20298">
    <property type="protein sequence ID" value="AAA32539.1"/>
    <property type="molecule type" value="Genomic_DNA"/>
</dbReference>
<dbReference type="EMBL" id="AF158101">
    <property type="protein sequence ID" value="AAD42476.1"/>
    <property type="molecule type" value="Genomic_DNA"/>
</dbReference>
<dbReference type="PIR" id="JF0036">
    <property type="entry name" value="GCBPT4"/>
</dbReference>
<dbReference type="RefSeq" id="NP_049806.1">
    <property type="nucleotide sequence ID" value="NC_000866.4"/>
</dbReference>
<dbReference type="PDB" id="5IV5">
    <property type="method" value="EM"/>
    <property type="resolution" value="4.11 A"/>
    <property type="chains" value="BE/DH/GA/ID/U/r=1-364"/>
</dbReference>
<dbReference type="PDBsum" id="5IV5"/>
<dbReference type="TCDB" id="1.K.1.1.1">
    <property type="family name" value="the gp27/5 t4-baseplate (t4-bp) family"/>
</dbReference>
<dbReference type="GeneID" id="1258551"/>
<dbReference type="KEGG" id="vg:1258551"/>
<dbReference type="OrthoDB" id="4392at10239"/>
<dbReference type="Proteomes" id="UP000009087">
    <property type="component" value="Segment"/>
</dbReference>
<dbReference type="GO" id="GO:0098025">
    <property type="term" value="C:virus tail, baseplate"/>
    <property type="evidence" value="ECO:0000314"/>
    <property type="project" value="UniProtKB"/>
</dbReference>
<dbReference type="GO" id="GO:0098003">
    <property type="term" value="P:viral tail assembly"/>
    <property type="evidence" value="ECO:0007669"/>
    <property type="project" value="UniProtKB-KW"/>
</dbReference>
<dbReference type="InterPro" id="IPR024389">
    <property type="entry name" value="Gp48_T4-like"/>
</dbReference>
<dbReference type="Pfam" id="PF11091">
    <property type="entry name" value="T4_tail_cap"/>
    <property type="match status" value="1"/>
</dbReference>
<reference key="1">
    <citation type="journal article" date="1988" name="Virology">
        <title>The structure of three bacteriophage T4 genes required for tail-tube assembly.</title>
        <authorList>
            <person name="Ishimoto L.K."/>
            <person name="Ishimoto K.S."/>
            <person name="Cascino A."/>
            <person name="Cipollaro M."/>
            <person name="Eiserling F.A."/>
        </authorList>
    </citation>
    <scope>NUCLEOTIDE SEQUENCE [GENOMIC DNA]</scope>
    <scope>PROTEIN SEQUENCE OF 2-13</scope>
    <scope>FUNCTION</scope>
</reference>
<reference key="2">
    <citation type="journal article" date="2003" name="Microbiol. Mol. Biol. Rev.">
        <title>Bacteriophage T4 genome.</title>
        <authorList>
            <person name="Miller E.S."/>
            <person name="Kutter E."/>
            <person name="Mosig G."/>
            <person name="Arisaka F."/>
            <person name="Kunisawa T."/>
            <person name="Ruger W."/>
        </authorList>
    </citation>
    <scope>NUCLEOTIDE SEQUENCE [LARGE SCALE GENOMIC DNA]</scope>
</reference>
<reference key="3">
    <citation type="journal article" date="1990" name="J. Virol.">
        <title>Structure of the bacteriophage T4 baseplate as determined by chemical cross-linking.</title>
        <authorList>
            <person name="Watts N.R."/>
            <person name="Coombs D.H."/>
        </authorList>
    </citation>
    <scope>SUBCELLULAR LOCATION</scope>
    <scope>SUBUNIT</scope>
</reference>
<reference key="4">
    <citation type="journal article" date="2003" name="Cell. Mol. Life Sci.">
        <title>Structure and morphogenesis of bacteriophage T4.</title>
        <authorList>
            <person name="Leiman P.G."/>
            <person name="Kanamaru S."/>
            <person name="Mesyanzhinov V.V."/>
            <person name="Arisaka F."/>
            <person name="Rossmann M.G."/>
        </authorList>
    </citation>
    <scope>REVIEW</scope>
</reference>
<reference key="5">
    <citation type="journal article" date="2010" name="Virol. J.">
        <title>Morphogenesis of the T4 tail and tail fibers.</title>
        <authorList>
            <person name="Leiman P.G."/>
            <person name="Arisaka F."/>
            <person name="van Raaij M.J."/>
            <person name="Kostyuchenko V.A."/>
            <person name="Aksyuk A.A."/>
            <person name="Kanamaru S."/>
            <person name="Rossmann M.G."/>
        </authorList>
    </citation>
    <scope>REVIEW ON FUNCTION</scope>
</reference>
<reference key="6">
    <citation type="journal article" date="2010" name="J. Mol. Biol.">
        <title>The baseplate wedges of bacteriophage T4 spontaneously assemble into hubless baseplate-like structure in vitro.</title>
        <authorList>
            <person name="Yap M.L."/>
            <person name="Mio K."/>
            <person name="Leiman P.G."/>
            <person name="Kanamaru S."/>
            <person name="Arisaka F."/>
        </authorList>
    </citation>
    <scope>SUBUNIT</scope>
</reference>
<reference key="7">
    <citation type="journal article" date="2016" name="Nature">
        <title>Structure of the T4 baseplate and its function in triggering sheath contraction.</title>
        <authorList>
            <person name="Taylor N.M."/>
            <person name="Prokhorov N.S."/>
            <person name="Guerrero-Ferreira R.C."/>
            <person name="Shneider M.M."/>
            <person name="Browning C."/>
            <person name="Goldie K.N."/>
            <person name="Stahlberg H."/>
            <person name="Leiman P.G."/>
        </authorList>
    </citation>
    <scope>STRUCTURE BY ELECTRON MICROSCOPY (4.11 ANGSTROMS)</scope>
    <scope>SUBUNIT</scope>
    <scope>SUBCELLULAR LOCATION</scope>
    <scope>FUNCTION</scope>
</reference>
<organism>
    <name type="scientific">Enterobacteria phage T4</name>
    <name type="common">Bacteriophage T4</name>
    <dbReference type="NCBI Taxonomy" id="10665"/>
    <lineage>
        <taxon>Viruses</taxon>
        <taxon>Duplodnaviria</taxon>
        <taxon>Heunggongvirae</taxon>
        <taxon>Uroviricota</taxon>
        <taxon>Caudoviricetes</taxon>
        <taxon>Straboviridae</taxon>
        <taxon>Tevenvirinae</taxon>
        <taxon>Tequatrovirus</taxon>
    </lineage>
</organism>
<name>BP48_BPT4</name>
<accession>P13339</accession>
<sequence length="364" mass="39734">MAIVKEITADLIKKSGEKISAGQSTKSEVGTKTYTAQFPTGRASGNDTTEDFQVTDLYKNGLLFTAYNMSSRDSGSLRSMRSNYSSSSSSILRTARNTISSTVSKLSNGLISNNNSGTISKSPIANILLPRSKSDVDTSSHRFNDVQESLISRGGGTATGVLSNIASTAVFGALESITQGIMADNNEQIYTTARSMYGGAENRTKVFTWDLTPRSTEDLMAIINIYQYFNYFSYGETGKSQYAAEIKGYLDDWYRSTLIEPLSPEDAAKNKTLFEKMTSSLTNVLVVSNPTVWMVKNFGATSKFDGKTEIFGPCQIQSIRFDKTPNGNFNGLAIAPNLPSTFTLEITMREIITLNRASLYAGTF</sequence>
<proteinExistence type="evidence at protein level"/>